<accession>B7L0S9</accession>
<protein>
    <recommendedName>
        <fullName evidence="1">Adenylate kinase</fullName>
        <shortName evidence="1">AK</shortName>
        <ecNumber evidence="1">2.7.4.3</ecNumber>
    </recommendedName>
    <alternativeName>
        <fullName evidence="1">ATP-AMP transphosphorylase</fullName>
    </alternativeName>
    <alternativeName>
        <fullName evidence="1">ATP:AMP phosphotransferase</fullName>
    </alternativeName>
    <alternativeName>
        <fullName evidence="1">Adenylate monophosphate kinase</fullName>
    </alternativeName>
</protein>
<keyword id="KW-0067">ATP-binding</keyword>
<keyword id="KW-0963">Cytoplasm</keyword>
<keyword id="KW-0418">Kinase</keyword>
<keyword id="KW-0545">Nucleotide biosynthesis</keyword>
<keyword id="KW-0547">Nucleotide-binding</keyword>
<keyword id="KW-0808">Transferase</keyword>
<gene>
    <name evidence="1" type="primary">adk</name>
    <name type="ordered locus">Mchl_2458</name>
</gene>
<proteinExistence type="inferred from homology"/>
<dbReference type="EC" id="2.7.4.3" evidence="1"/>
<dbReference type="EMBL" id="CP001298">
    <property type="protein sequence ID" value="ACK83300.1"/>
    <property type="molecule type" value="Genomic_DNA"/>
</dbReference>
<dbReference type="RefSeq" id="WP_015950885.1">
    <property type="nucleotide sequence ID" value="NC_011757.1"/>
</dbReference>
<dbReference type="SMR" id="B7L0S9"/>
<dbReference type="KEGG" id="mch:Mchl_2458"/>
<dbReference type="HOGENOM" id="CLU_032354_1_2_5"/>
<dbReference type="UniPathway" id="UPA00588">
    <property type="reaction ID" value="UER00649"/>
</dbReference>
<dbReference type="Proteomes" id="UP000002385">
    <property type="component" value="Chromosome"/>
</dbReference>
<dbReference type="GO" id="GO:0005737">
    <property type="term" value="C:cytoplasm"/>
    <property type="evidence" value="ECO:0007669"/>
    <property type="project" value="UniProtKB-SubCell"/>
</dbReference>
<dbReference type="GO" id="GO:0004017">
    <property type="term" value="F:adenylate kinase activity"/>
    <property type="evidence" value="ECO:0007669"/>
    <property type="project" value="UniProtKB-UniRule"/>
</dbReference>
<dbReference type="GO" id="GO:0005524">
    <property type="term" value="F:ATP binding"/>
    <property type="evidence" value="ECO:0007669"/>
    <property type="project" value="UniProtKB-UniRule"/>
</dbReference>
<dbReference type="GO" id="GO:0044209">
    <property type="term" value="P:AMP salvage"/>
    <property type="evidence" value="ECO:0007669"/>
    <property type="project" value="UniProtKB-UniRule"/>
</dbReference>
<dbReference type="CDD" id="cd01428">
    <property type="entry name" value="ADK"/>
    <property type="match status" value="1"/>
</dbReference>
<dbReference type="Gene3D" id="3.40.50.300">
    <property type="entry name" value="P-loop containing nucleotide triphosphate hydrolases"/>
    <property type="match status" value="1"/>
</dbReference>
<dbReference type="HAMAP" id="MF_00235">
    <property type="entry name" value="Adenylate_kinase_Adk"/>
    <property type="match status" value="1"/>
</dbReference>
<dbReference type="InterPro" id="IPR006259">
    <property type="entry name" value="Adenyl_kin_sub"/>
</dbReference>
<dbReference type="InterPro" id="IPR000850">
    <property type="entry name" value="Adenylat/UMP-CMP_kin"/>
</dbReference>
<dbReference type="InterPro" id="IPR033690">
    <property type="entry name" value="Adenylat_kinase_CS"/>
</dbReference>
<dbReference type="InterPro" id="IPR027417">
    <property type="entry name" value="P-loop_NTPase"/>
</dbReference>
<dbReference type="NCBIfam" id="TIGR01351">
    <property type="entry name" value="adk"/>
    <property type="match status" value="1"/>
</dbReference>
<dbReference type="NCBIfam" id="NF001381">
    <property type="entry name" value="PRK00279.1-3"/>
    <property type="match status" value="1"/>
</dbReference>
<dbReference type="NCBIfam" id="NF011100">
    <property type="entry name" value="PRK14527.1"/>
    <property type="match status" value="1"/>
</dbReference>
<dbReference type="NCBIfam" id="NF011101">
    <property type="entry name" value="PRK14528.1"/>
    <property type="match status" value="1"/>
</dbReference>
<dbReference type="NCBIfam" id="NF011104">
    <property type="entry name" value="PRK14531.1"/>
    <property type="match status" value="1"/>
</dbReference>
<dbReference type="NCBIfam" id="NF011105">
    <property type="entry name" value="PRK14532.1"/>
    <property type="match status" value="1"/>
</dbReference>
<dbReference type="PANTHER" id="PTHR23359">
    <property type="entry name" value="NUCLEOTIDE KINASE"/>
    <property type="match status" value="1"/>
</dbReference>
<dbReference type="Pfam" id="PF00406">
    <property type="entry name" value="ADK"/>
    <property type="match status" value="1"/>
</dbReference>
<dbReference type="PRINTS" id="PR00094">
    <property type="entry name" value="ADENYLTKNASE"/>
</dbReference>
<dbReference type="SUPFAM" id="SSF52540">
    <property type="entry name" value="P-loop containing nucleoside triphosphate hydrolases"/>
    <property type="match status" value="1"/>
</dbReference>
<dbReference type="PROSITE" id="PS00113">
    <property type="entry name" value="ADENYLATE_KINASE"/>
    <property type="match status" value="1"/>
</dbReference>
<evidence type="ECO:0000255" key="1">
    <source>
        <dbReference type="HAMAP-Rule" id="MF_00235"/>
    </source>
</evidence>
<sequence>MRIILLGPPGAGKGTQSERIVERYRVPQLSTGDMLRAAVAAETPVGLEAKAIMESGGLVSDAIVVGIVADRIEEADAKNGFILDGFPRTVEQAKALDAMLAQKGIALDAVVEFVVDETALVGRIAKRAEETAARGQPVRKDDTPEVFKTRLDAYRKQTAPLSDYYAGTGLLRKIDGMKPIDVVTGDVTALLEGFRETASS</sequence>
<feature type="chain" id="PRO_1000191153" description="Adenylate kinase">
    <location>
        <begin position="1"/>
        <end position="200"/>
    </location>
</feature>
<feature type="region of interest" description="NMP" evidence="1">
    <location>
        <begin position="30"/>
        <end position="59"/>
    </location>
</feature>
<feature type="region of interest" description="LID" evidence="1">
    <location>
        <begin position="126"/>
        <end position="142"/>
    </location>
</feature>
<feature type="binding site" evidence="1">
    <location>
        <begin position="10"/>
        <end position="15"/>
    </location>
    <ligand>
        <name>ATP</name>
        <dbReference type="ChEBI" id="CHEBI:30616"/>
    </ligand>
</feature>
<feature type="binding site" evidence="1">
    <location>
        <position position="31"/>
    </location>
    <ligand>
        <name>AMP</name>
        <dbReference type="ChEBI" id="CHEBI:456215"/>
    </ligand>
</feature>
<feature type="binding site" evidence="1">
    <location>
        <position position="36"/>
    </location>
    <ligand>
        <name>AMP</name>
        <dbReference type="ChEBI" id="CHEBI:456215"/>
    </ligand>
</feature>
<feature type="binding site" evidence="1">
    <location>
        <begin position="57"/>
        <end position="59"/>
    </location>
    <ligand>
        <name>AMP</name>
        <dbReference type="ChEBI" id="CHEBI:456215"/>
    </ligand>
</feature>
<feature type="binding site" evidence="1">
    <location>
        <begin position="85"/>
        <end position="88"/>
    </location>
    <ligand>
        <name>AMP</name>
        <dbReference type="ChEBI" id="CHEBI:456215"/>
    </ligand>
</feature>
<feature type="binding site" evidence="1">
    <location>
        <position position="92"/>
    </location>
    <ligand>
        <name>AMP</name>
        <dbReference type="ChEBI" id="CHEBI:456215"/>
    </ligand>
</feature>
<feature type="binding site" evidence="1">
    <location>
        <position position="127"/>
    </location>
    <ligand>
        <name>ATP</name>
        <dbReference type="ChEBI" id="CHEBI:30616"/>
    </ligand>
</feature>
<feature type="binding site" evidence="1">
    <location>
        <position position="139"/>
    </location>
    <ligand>
        <name>AMP</name>
        <dbReference type="ChEBI" id="CHEBI:456215"/>
    </ligand>
</feature>
<feature type="binding site" evidence="1">
    <location>
        <position position="150"/>
    </location>
    <ligand>
        <name>AMP</name>
        <dbReference type="ChEBI" id="CHEBI:456215"/>
    </ligand>
</feature>
<feature type="binding site" evidence="1">
    <location>
        <position position="178"/>
    </location>
    <ligand>
        <name>ATP</name>
        <dbReference type="ChEBI" id="CHEBI:30616"/>
    </ligand>
</feature>
<name>KAD_METC4</name>
<comment type="function">
    <text evidence="1">Catalyzes the reversible transfer of the terminal phosphate group between ATP and AMP. Plays an important role in cellular energy homeostasis and in adenine nucleotide metabolism.</text>
</comment>
<comment type="catalytic activity">
    <reaction evidence="1">
        <text>AMP + ATP = 2 ADP</text>
        <dbReference type="Rhea" id="RHEA:12973"/>
        <dbReference type="ChEBI" id="CHEBI:30616"/>
        <dbReference type="ChEBI" id="CHEBI:456215"/>
        <dbReference type="ChEBI" id="CHEBI:456216"/>
        <dbReference type="EC" id="2.7.4.3"/>
    </reaction>
</comment>
<comment type="pathway">
    <text evidence="1">Purine metabolism; AMP biosynthesis via salvage pathway; AMP from ADP: step 1/1.</text>
</comment>
<comment type="subunit">
    <text evidence="1">Monomer.</text>
</comment>
<comment type="subcellular location">
    <subcellularLocation>
        <location evidence="1">Cytoplasm</location>
    </subcellularLocation>
</comment>
<comment type="domain">
    <text evidence="1">Consists of three domains, a large central CORE domain and two small peripheral domains, NMPbind and LID, which undergo movements during catalysis. The LID domain closes over the site of phosphoryl transfer upon ATP binding. Assembling and dissambling the active center during each catalytic cycle provides an effective means to prevent ATP hydrolysis.</text>
</comment>
<comment type="similarity">
    <text evidence="1">Belongs to the adenylate kinase family.</text>
</comment>
<organism>
    <name type="scientific">Methylorubrum extorquens (strain CM4 / NCIMB 13688)</name>
    <name type="common">Methylobacterium extorquens</name>
    <dbReference type="NCBI Taxonomy" id="440085"/>
    <lineage>
        <taxon>Bacteria</taxon>
        <taxon>Pseudomonadati</taxon>
        <taxon>Pseudomonadota</taxon>
        <taxon>Alphaproteobacteria</taxon>
        <taxon>Hyphomicrobiales</taxon>
        <taxon>Methylobacteriaceae</taxon>
        <taxon>Methylorubrum</taxon>
    </lineage>
</organism>
<reference key="1">
    <citation type="submission" date="2008-12" db="EMBL/GenBank/DDBJ databases">
        <title>Complete sequence of chromosome of Methylobacterium chloromethanicum CM4.</title>
        <authorList>
            <consortium name="US DOE Joint Genome Institute"/>
            <person name="Lucas S."/>
            <person name="Copeland A."/>
            <person name="Lapidus A."/>
            <person name="Glavina del Rio T."/>
            <person name="Dalin E."/>
            <person name="Tice H."/>
            <person name="Bruce D."/>
            <person name="Goodwin L."/>
            <person name="Pitluck S."/>
            <person name="Chertkov O."/>
            <person name="Brettin T."/>
            <person name="Detter J.C."/>
            <person name="Han C."/>
            <person name="Larimer F."/>
            <person name="Land M."/>
            <person name="Hauser L."/>
            <person name="Kyrpides N."/>
            <person name="Mikhailova N."/>
            <person name="Marx C."/>
            <person name="Richardson P."/>
        </authorList>
    </citation>
    <scope>NUCLEOTIDE SEQUENCE [LARGE SCALE GENOMIC DNA]</scope>
    <source>
        <strain>CM4 / NCIMB 13688</strain>
    </source>
</reference>